<organism>
    <name type="scientific">Gallus gallus</name>
    <name type="common">Chicken</name>
    <dbReference type="NCBI Taxonomy" id="9031"/>
    <lineage>
        <taxon>Eukaryota</taxon>
        <taxon>Metazoa</taxon>
        <taxon>Chordata</taxon>
        <taxon>Craniata</taxon>
        <taxon>Vertebrata</taxon>
        <taxon>Euteleostomi</taxon>
        <taxon>Archelosauria</taxon>
        <taxon>Archosauria</taxon>
        <taxon>Dinosauria</taxon>
        <taxon>Saurischia</taxon>
        <taxon>Theropoda</taxon>
        <taxon>Coelurosauria</taxon>
        <taxon>Aves</taxon>
        <taxon>Neognathae</taxon>
        <taxon>Galloanserae</taxon>
        <taxon>Galliformes</taxon>
        <taxon>Phasianidae</taxon>
        <taxon>Phasianinae</taxon>
        <taxon>Gallus</taxon>
    </lineage>
</organism>
<protein>
    <recommendedName>
        <fullName evidence="6">Retinaldehyde-binding protein 1</fullName>
    </recommendedName>
    <alternativeName>
        <fullName>Cellular retinaldehyde-binding protein</fullName>
    </alternativeName>
</protein>
<evidence type="ECO:0000250" key="1">
    <source>
        <dbReference type="UniProtKB" id="P10123"/>
    </source>
</evidence>
<evidence type="ECO:0000250" key="2">
    <source>
        <dbReference type="UniProtKB" id="P12271"/>
    </source>
</evidence>
<evidence type="ECO:0000255" key="3"/>
<evidence type="ECO:0000255" key="4">
    <source>
        <dbReference type="PROSITE-ProRule" id="PRU00056"/>
    </source>
</evidence>
<evidence type="ECO:0000269" key="5">
    <source>
    </source>
</evidence>
<evidence type="ECO:0000305" key="6"/>
<proteinExistence type="evidence at protein level"/>
<reference key="1">
    <citation type="journal article" date="2004" name="Nature">
        <title>Sequence and comparative analysis of the chicken genome provide unique perspectives on vertebrate evolution.</title>
        <authorList>
            <person name="Hillier L.W."/>
            <person name="Miller W."/>
            <person name="Birney E."/>
            <person name="Warren W."/>
            <person name="Hardison R.C."/>
            <person name="Ponting C.P."/>
            <person name="Bork P."/>
            <person name="Burt D.W."/>
            <person name="Groenen M.A.M."/>
            <person name="Delany M.E."/>
            <person name="Dodgson J.B."/>
            <person name="Chinwalla A.T."/>
            <person name="Cliften P.F."/>
            <person name="Clifton S.W."/>
            <person name="Delehaunty K.D."/>
            <person name="Fronick C."/>
            <person name="Fulton R.S."/>
            <person name="Graves T.A."/>
            <person name="Kremitzki C."/>
            <person name="Layman D."/>
            <person name="Magrini V."/>
            <person name="McPherson J.D."/>
            <person name="Miner T.L."/>
            <person name="Minx P."/>
            <person name="Nash W.E."/>
            <person name="Nhan M.N."/>
            <person name="Nelson J.O."/>
            <person name="Oddy L.G."/>
            <person name="Pohl C.S."/>
            <person name="Randall-Maher J."/>
            <person name="Smith S.M."/>
            <person name="Wallis J.W."/>
            <person name="Yang S.-P."/>
            <person name="Romanov M.N."/>
            <person name="Rondelli C.M."/>
            <person name="Paton B."/>
            <person name="Smith J."/>
            <person name="Morrice D."/>
            <person name="Daniels L."/>
            <person name="Tempest H.G."/>
            <person name="Robertson L."/>
            <person name="Masabanda J.S."/>
            <person name="Griffin D.K."/>
            <person name="Vignal A."/>
            <person name="Fillon V."/>
            <person name="Jacobbson L."/>
            <person name="Kerje S."/>
            <person name="Andersson L."/>
            <person name="Crooijmans R.P."/>
            <person name="Aerts J."/>
            <person name="van der Poel J.J."/>
            <person name="Ellegren H."/>
            <person name="Caldwell R.B."/>
            <person name="Hubbard S.J."/>
            <person name="Grafham D.V."/>
            <person name="Kierzek A.M."/>
            <person name="McLaren S.R."/>
            <person name="Overton I.M."/>
            <person name="Arakawa H."/>
            <person name="Beattie K.J."/>
            <person name="Bezzubov Y."/>
            <person name="Boardman P.E."/>
            <person name="Bonfield J.K."/>
            <person name="Croning M.D.R."/>
            <person name="Davies R.M."/>
            <person name="Francis M.D."/>
            <person name="Humphray S.J."/>
            <person name="Scott C.E."/>
            <person name="Taylor R.G."/>
            <person name="Tickle C."/>
            <person name="Brown W.R.A."/>
            <person name="Rogers J."/>
            <person name="Buerstedde J.-M."/>
            <person name="Wilson S.A."/>
            <person name="Stubbs L."/>
            <person name="Ovcharenko I."/>
            <person name="Gordon L."/>
            <person name="Lucas S."/>
            <person name="Miller M.M."/>
            <person name="Inoko H."/>
            <person name="Shiina T."/>
            <person name="Kaufman J."/>
            <person name="Salomonsen J."/>
            <person name="Skjoedt K."/>
            <person name="Wong G.K.-S."/>
            <person name="Wang J."/>
            <person name="Liu B."/>
            <person name="Wang J."/>
            <person name="Yu J."/>
            <person name="Yang H."/>
            <person name="Nefedov M."/>
            <person name="Koriabine M."/>
            <person name="Dejong P.J."/>
            <person name="Goodstadt L."/>
            <person name="Webber C."/>
            <person name="Dickens N.J."/>
            <person name="Letunic I."/>
            <person name="Suyama M."/>
            <person name="Torrents D."/>
            <person name="von Mering C."/>
            <person name="Zdobnov E.M."/>
            <person name="Makova K."/>
            <person name="Nekrutenko A."/>
            <person name="Elnitski L."/>
            <person name="Eswara P."/>
            <person name="King D.C."/>
            <person name="Yang S.-P."/>
            <person name="Tyekucheva S."/>
            <person name="Radakrishnan A."/>
            <person name="Harris R.S."/>
            <person name="Chiaromonte F."/>
            <person name="Taylor J."/>
            <person name="He J."/>
            <person name="Rijnkels M."/>
            <person name="Griffiths-Jones S."/>
            <person name="Ureta-Vidal A."/>
            <person name="Hoffman M.M."/>
            <person name="Severin J."/>
            <person name="Searle S.M.J."/>
            <person name="Law A.S."/>
            <person name="Speed D."/>
            <person name="Waddington D."/>
            <person name="Cheng Z."/>
            <person name="Tuzun E."/>
            <person name="Eichler E."/>
            <person name="Bao Z."/>
            <person name="Flicek P."/>
            <person name="Shteynberg D.D."/>
            <person name="Brent M.R."/>
            <person name="Bye J.M."/>
            <person name="Huckle E.J."/>
            <person name="Chatterji S."/>
            <person name="Dewey C."/>
            <person name="Pachter L."/>
            <person name="Kouranov A."/>
            <person name="Mourelatos Z."/>
            <person name="Hatzigeorgiou A.G."/>
            <person name="Paterson A.H."/>
            <person name="Ivarie R."/>
            <person name="Brandstrom M."/>
            <person name="Axelsson E."/>
            <person name="Backstrom N."/>
            <person name="Berlin S."/>
            <person name="Webster M.T."/>
            <person name="Pourquie O."/>
            <person name="Reymond A."/>
            <person name="Ucla C."/>
            <person name="Antonarakis S.E."/>
            <person name="Long M."/>
            <person name="Emerson J.J."/>
            <person name="Betran E."/>
            <person name="Dupanloup I."/>
            <person name="Kaessmann H."/>
            <person name="Hinrichs A.S."/>
            <person name="Bejerano G."/>
            <person name="Furey T.S."/>
            <person name="Harte R.A."/>
            <person name="Raney B."/>
            <person name="Siepel A."/>
            <person name="Kent W.J."/>
            <person name="Haussler D."/>
            <person name="Eyras E."/>
            <person name="Castelo R."/>
            <person name="Abril J.F."/>
            <person name="Castellano S."/>
            <person name="Camara F."/>
            <person name="Parra G."/>
            <person name="Guigo R."/>
            <person name="Bourque G."/>
            <person name="Tesler G."/>
            <person name="Pevzner P.A."/>
            <person name="Smit A."/>
            <person name="Fulton L.A."/>
            <person name="Mardis E.R."/>
            <person name="Wilson R.K."/>
        </authorList>
    </citation>
    <scope>NUCLEOTIDE SEQUENCE [LARGE SCALE GENOMIC DNA]</scope>
    <source>
        <strain>Red jungle fowl</strain>
    </source>
</reference>
<reference key="2">
    <citation type="journal article" date="2013" name="Nat. Chem. Biol.">
        <title>Identification of DES1 as a vitamin A isomerase in Mueller glial cells of the retina.</title>
        <authorList>
            <person name="Kaylor J.J."/>
            <person name="Yuan Q."/>
            <person name="Cook J."/>
            <person name="Sarfare S."/>
            <person name="Makshanoff J."/>
            <person name="Miu A."/>
            <person name="Kim A."/>
            <person name="Kim P."/>
            <person name="Habib S."/>
            <person name="Roybal C.N."/>
            <person name="Xu T."/>
            <person name="Nusinowitz S."/>
            <person name="Travis G.H."/>
        </authorList>
    </citation>
    <scope>INTERACTION WITH DEGS1</scope>
</reference>
<dbReference type="EMBL" id="AADN05000047">
    <property type="status" value="NOT_ANNOTATED_CDS"/>
    <property type="molecule type" value="Genomic_DNA"/>
</dbReference>
<dbReference type="RefSeq" id="NP_001019865.1">
    <property type="nucleotide sequence ID" value="NM_001024694.2"/>
</dbReference>
<dbReference type="SMR" id="E1C1U1"/>
<dbReference type="DIP" id="DIP-61752N"/>
<dbReference type="FunCoup" id="E1C1U1">
    <property type="interactions" value="38"/>
</dbReference>
<dbReference type="IntAct" id="E1C1U1">
    <property type="interactions" value="1"/>
</dbReference>
<dbReference type="PaxDb" id="9031-ENSGALP00000041666"/>
<dbReference type="Ensembl" id="ENSGALT00010038922.1">
    <property type="protein sequence ID" value="ENSGALP00010022490.1"/>
    <property type="gene ID" value="ENSGALG00010016199.1"/>
</dbReference>
<dbReference type="GeneID" id="415492"/>
<dbReference type="KEGG" id="gga:415492"/>
<dbReference type="CTD" id="6017"/>
<dbReference type="VEuPathDB" id="HostDB:geneid_415492"/>
<dbReference type="eggNOG" id="KOG1471">
    <property type="taxonomic scope" value="Eukaryota"/>
</dbReference>
<dbReference type="GeneTree" id="ENSGT00940000160026"/>
<dbReference type="HOGENOM" id="CLU_046597_4_0_1"/>
<dbReference type="InParanoid" id="E1C1U1"/>
<dbReference type="OrthoDB" id="75724at2759"/>
<dbReference type="PhylomeDB" id="E1C1U1"/>
<dbReference type="Reactome" id="R-GGA-2187335">
    <property type="pathway name" value="The retinoid cycle in cones (daylight vision)"/>
</dbReference>
<dbReference type="Reactome" id="R-GGA-2453902">
    <property type="pathway name" value="The canonical retinoid cycle in rods (twilight vision)"/>
</dbReference>
<dbReference type="PRO" id="PR:E1C1U1"/>
<dbReference type="Proteomes" id="UP000000539">
    <property type="component" value="Chromosome 10"/>
</dbReference>
<dbReference type="Bgee" id="ENSGALG00000006676">
    <property type="expression patterns" value="Expressed in brain and 4 other cell types or tissues"/>
</dbReference>
<dbReference type="GO" id="GO:0005813">
    <property type="term" value="C:centrosome"/>
    <property type="evidence" value="ECO:0007669"/>
    <property type="project" value="Ensembl"/>
</dbReference>
<dbReference type="GO" id="GO:0005829">
    <property type="term" value="C:cytosol"/>
    <property type="evidence" value="ECO:0007669"/>
    <property type="project" value="Ensembl"/>
</dbReference>
<dbReference type="GO" id="GO:0005654">
    <property type="term" value="C:nucleoplasm"/>
    <property type="evidence" value="ECO:0007669"/>
    <property type="project" value="Ensembl"/>
</dbReference>
<dbReference type="GO" id="GO:0005502">
    <property type="term" value="F:11-cis retinal binding"/>
    <property type="evidence" value="ECO:0007669"/>
    <property type="project" value="Ensembl"/>
</dbReference>
<dbReference type="GO" id="GO:1902936">
    <property type="term" value="F:phosphatidylinositol bisphosphate binding"/>
    <property type="evidence" value="ECO:0000318"/>
    <property type="project" value="GO_Central"/>
</dbReference>
<dbReference type="GO" id="GO:0019841">
    <property type="term" value="F:retinol binding"/>
    <property type="evidence" value="ECO:0007669"/>
    <property type="project" value="UniProtKB-KW"/>
</dbReference>
<dbReference type="GO" id="GO:0007601">
    <property type="term" value="P:visual perception"/>
    <property type="evidence" value="ECO:0007669"/>
    <property type="project" value="UniProtKB-KW"/>
</dbReference>
<dbReference type="CDD" id="cd00170">
    <property type="entry name" value="SEC14"/>
    <property type="match status" value="1"/>
</dbReference>
<dbReference type="FunFam" id="3.40.525.10:FF:000002">
    <property type="entry name" value="Alpha-tocopherol transfer protein-like"/>
    <property type="match status" value="1"/>
</dbReference>
<dbReference type="Gene3D" id="1.20.5.1200">
    <property type="entry name" value="Alpha-tocopherol transfer"/>
    <property type="match status" value="1"/>
</dbReference>
<dbReference type="Gene3D" id="3.40.525.10">
    <property type="entry name" value="CRAL-TRIO lipid binding domain"/>
    <property type="match status" value="1"/>
</dbReference>
<dbReference type="Gene3D" id="1.10.8.20">
    <property type="entry name" value="N-terminal domain of phosphatidylinositol transfer protein sec14p"/>
    <property type="match status" value="1"/>
</dbReference>
<dbReference type="InterPro" id="IPR001251">
    <property type="entry name" value="CRAL-TRIO_dom"/>
</dbReference>
<dbReference type="InterPro" id="IPR036865">
    <property type="entry name" value="CRAL-TRIO_dom_sf"/>
</dbReference>
<dbReference type="InterPro" id="IPR011074">
    <property type="entry name" value="CRAL/TRIO_N_dom"/>
</dbReference>
<dbReference type="InterPro" id="IPR036273">
    <property type="entry name" value="CRAL/TRIO_N_dom_sf"/>
</dbReference>
<dbReference type="PANTHER" id="PTHR10174">
    <property type="entry name" value="ALPHA-TOCOPHEROL TRANSFER PROTEIN-RELATED"/>
    <property type="match status" value="1"/>
</dbReference>
<dbReference type="PANTHER" id="PTHR10174:SF200">
    <property type="entry name" value="RETINALDEHYDE-BINDING PROTEIN 1"/>
    <property type="match status" value="1"/>
</dbReference>
<dbReference type="Pfam" id="PF00650">
    <property type="entry name" value="CRAL_TRIO"/>
    <property type="match status" value="1"/>
</dbReference>
<dbReference type="Pfam" id="PF03765">
    <property type="entry name" value="CRAL_TRIO_N"/>
    <property type="match status" value="1"/>
</dbReference>
<dbReference type="PRINTS" id="PR00180">
    <property type="entry name" value="CRETINALDHBP"/>
</dbReference>
<dbReference type="SMART" id="SM01100">
    <property type="entry name" value="CRAL_TRIO_N"/>
    <property type="match status" value="1"/>
</dbReference>
<dbReference type="SMART" id="SM00516">
    <property type="entry name" value="SEC14"/>
    <property type="match status" value="1"/>
</dbReference>
<dbReference type="SUPFAM" id="SSF52087">
    <property type="entry name" value="CRAL/TRIO domain"/>
    <property type="match status" value="1"/>
</dbReference>
<dbReference type="SUPFAM" id="SSF46938">
    <property type="entry name" value="CRAL/TRIO N-terminal domain"/>
    <property type="match status" value="1"/>
</dbReference>
<dbReference type="PROSITE" id="PS50191">
    <property type="entry name" value="CRAL_TRIO"/>
    <property type="match status" value="1"/>
</dbReference>
<sequence length="316" mass="36476">MSAVTGTFRIVSEEEQALRTKLERLTTKDHGPVFGRCQQIPPHTLQKAKDELNETEEQREAAVKALRELVQERAGSEDVCKAVAEKMQGKDDSFFLRFIRARKFDVHRAYDLLKGYVNFRQQYPELFDNLTPEAVRSTIEAGYPGILASRDKYGRVVMLFNIENWDYEEITFDEILRAYCVILEKLLENEETQINGFCIIENFKGFTMQQASGIKPSELKKMVDMLQDSFPARFKAVHFIHQPWYFTTTYNVVKPFLKSKLLERVFVHGEELESFYQEIDADILPADFGGNLPKYDGKATAEQLFGPRIEAEDTAL</sequence>
<keyword id="KW-0007">Acetylation</keyword>
<keyword id="KW-0175">Coiled coil</keyword>
<keyword id="KW-0963">Cytoplasm</keyword>
<keyword id="KW-1185">Reference proteome</keyword>
<keyword id="KW-0683">Retinol-binding</keyword>
<keyword id="KW-0716">Sensory transduction</keyword>
<keyword id="KW-0813">Transport</keyword>
<keyword id="KW-0844">Vision</keyword>
<gene>
    <name type="primary">RLBP1</name>
    <name type="synonym">CRALBP</name>
</gene>
<name>RLBP1_CHICK</name>
<feature type="initiator methionine" description="Removed" evidence="1">
    <location>
        <position position="1"/>
    </location>
</feature>
<feature type="chain" id="PRO_0000450322" description="Retinaldehyde-binding protein 1">
    <location>
        <begin position="2"/>
        <end position="316"/>
    </location>
</feature>
<feature type="domain" description="CRAL-TRIO" evidence="4">
    <location>
        <begin position="135"/>
        <end position="296"/>
    </location>
</feature>
<feature type="coiled-coil region" evidence="3">
    <location>
        <begin position="45"/>
        <end position="72"/>
    </location>
</feature>
<feature type="binding site" evidence="2">
    <location>
        <position position="179"/>
    </location>
    <ligand>
        <name>11-cis-retinal</name>
        <dbReference type="ChEBI" id="CHEBI:16066"/>
    </ligand>
</feature>
<feature type="binding site" evidence="2">
    <location>
        <position position="201"/>
    </location>
    <ligand>
        <name>11-cis-retinal</name>
        <dbReference type="ChEBI" id="CHEBI:16066"/>
    </ligand>
</feature>
<feature type="modified residue" description="N-acetylserine" evidence="1">
    <location>
        <position position="2"/>
    </location>
</feature>
<comment type="function">
    <text evidence="2">Soluble retinoid carrier essential the proper function of both rod and cone photoreceptors. Participates in the regeneration of active 11-cis-retinol and 11-cis-retinaldehyde, from the inactive 11-trans products of the rhodopsin photocycle and in the de novo synthesis of these retinoids from 11-trans metabolic precursors. The cycling of retinoids between photoreceptor and adjacent pigment epithelium cells is known as the 'visual cycle'.</text>
</comment>
<comment type="subunit">
    <text evidence="5">Interacts with DEGS1; the interaction increases synthesis of chromophore-precursors by DEGS1.</text>
</comment>
<comment type="subcellular location">
    <subcellularLocation>
        <location evidence="2">Cytoplasm</location>
    </subcellularLocation>
</comment>
<accession>E1C1U1</accession>